<feature type="chain" id="PRO_0000115552" description="Small ribosomal subunit protein uS15">
    <location>
        <begin position="1"/>
        <end position="89"/>
    </location>
</feature>
<gene>
    <name evidence="1" type="primary">rpsO</name>
    <name type="ordered locus">SMU_154</name>
</gene>
<protein>
    <recommendedName>
        <fullName evidence="1">Small ribosomal subunit protein uS15</fullName>
    </recommendedName>
    <alternativeName>
        <fullName evidence="2">30S ribosomal protein S15</fullName>
    </alternativeName>
</protein>
<keyword id="KW-1185">Reference proteome</keyword>
<keyword id="KW-0687">Ribonucleoprotein</keyword>
<keyword id="KW-0689">Ribosomal protein</keyword>
<keyword id="KW-0694">RNA-binding</keyword>
<keyword id="KW-0699">rRNA-binding</keyword>
<proteinExistence type="inferred from homology"/>
<comment type="function">
    <text evidence="1">One of the primary rRNA binding proteins, it binds directly to 16S rRNA where it helps nucleate assembly of the platform of the 30S subunit by binding and bridging several RNA helices of the 16S rRNA.</text>
</comment>
<comment type="function">
    <text evidence="1">Forms an intersubunit bridge (bridge B4) with the 23S rRNA of the 50S subunit in the ribosome.</text>
</comment>
<comment type="subunit">
    <text evidence="1">Part of the 30S ribosomal subunit. Forms a bridge to the 50S subunit in the 70S ribosome, contacting the 23S rRNA.</text>
</comment>
<comment type="similarity">
    <text evidence="1">Belongs to the universal ribosomal protein uS15 family.</text>
</comment>
<accession>Q8DWB3</accession>
<dbReference type="EMBL" id="AE014133">
    <property type="protein sequence ID" value="AAN57930.1"/>
    <property type="molecule type" value="Genomic_DNA"/>
</dbReference>
<dbReference type="RefSeq" id="NP_720624.1">
    <property type="nucleotide sequence ID" value="NC_004350.2"/>
</dbReference>
<dbReference type="RefSeq" id="WP_002263008.1">
    <property type="nucleotide sequence ID" value="NC_004350.2"/>
</dbReference>
<dbReference type="SMR" id="Q8DWB3"/>
<dbReference type="STRING" id="210007.SMU_154"/>
<dbReference type="GeneID" id="93860522"/>
<dbReference type="KEGG" id="smu:SMU_154"/>
<dbReference type="PATRIC" id="fig|210007.7.peg.131"/>
<dbReference type="eggNOG" id="COG0184">
    <property type="taxonomic scope" value="Bacteria"/>
</dbReference>
<dbReference type="HOGENOM" id="CLU_148518_0_0_9"/>
<dbReference type="OrthoDB" id="9799262at2"/>
<dbReference type="PhylomeDB" id="Q8DWB3"/>
<dbReference type="Proteomes" id="UP000002512">
    <property type="component" value="Chromosome"/>
</dbReference>
<dbReference type="GO" id="GO:0022627">
    <property type="term" value="C:cytosolic small ribosomal subunit"/>
    <property type="evidence" value="ECO:0007669"/>
    <property type="project" value="TreeGrafter"/>
</dbReference>
<dbReference type="GO" id="GO:0019843">
    <property type="term" value="F:rRNA binding"/>
    <property type="evidence" value="ECO:0007669"/>
    <property type="project" value="UniProtKB-UniRule"/>
</dbReference>
<dbReference type="GO" id="GO:0003735">
    <property type="term" value="F:structural constituent of ribosome"/>
    <property type="evidence" value="ECO:0007669"/>
    <property type="project" value="InterPro"/>
</dbReference>
<dbReference type="GO" id="GO:0006412">
    <property type="term" value="P:translation"/>
    <property type="evidence" value="ECO:0007669"/>
    <property type="project" value="UniProtKB-UniRule"/>
</dbReference>
<dbReference type="CDD" id="cd00353">
    <property type="entry name" value="Ribosomal_S15p_S13e"/>
    <property type="match status" value="1"/>
</dbReference>
<dbReference type="FunFam" id="1.10.287.10:FF:000002">
    <property type="entry name" value="30S ribosomal protein S15"/>
    <property type="match status" value="1"/>
</dbReference>
<dbReference type="Gene3D" id="6.10.250.3130">
    <property type="match status" value="1"/>
</dbReference>
<dbReference type="Gene3D" id="1.10.287.10">
    <property type="entry name" value="S15/NS1, RNA-binding"/>
    <property type="match status" value="1"/>
</dbReference>
<dbReference type="HAMAP" id="MF_01343_B">
    <property type="entry name" value="Ribosomal_uS15_B"/>
    <property type="match status" value="1"/>
</dbReference>
<dbReference type="InterPro" id="IPR000589">
    <property type="entry name" value="Ribosomal_uS15"/>
</dbReference>
<dbReference type="InterPro" id="IPR005290">
    <property type="entry name" value="Ribosomal_uS15_bac-type"/>
</dbReference>
<dbReference type="InterPro" id="IPR009068">
    <property type="entry name" value="uS15_NS1_RNA-bd_sf"/>
</dbReference>
<dbReference type="NCBIfam" id="TIGR00952">
    <property type="entry name" value="S15_bact"/>
    <property type="match status" value="1"/>
</dbReference>
<dbReference type="PANTHER" id="PTHR23321">
    <property type="entry name" value="RIBOSOMAL PROTEIN S15, BACTERIAL AND ORGANELLAR"/>
    <property type="match status" value="1"/>
</dbReference>
<dbReference type="PANTHER" id="PTHR23321:SF26">
    <property type="entry name" value="SMALL RIBOSOMAL SUBUNIT PROTEIN US15M"/>
    <property type="match status" value="1"/>
</dbReference>
<dbReference type="Pfam" id="PF00312">
    <property type="entry name" value="Ribosomal_S15"/>
    <property type="match status" value="1"/>
</dbReference>
<dbReference type="SMART" id="SM01387">
    <property type="entry name" value="Ribosomal_S15"/>
    <property type="match status" value="1"/>
</dbReference>
<dbReference type="SUPFAM" id="SSF47060">
    <property type="entry name" value="S15/NS1 RNA-binding domain"/>
    <property type="match status" value="1"/>
</dbReference>
<dbReference type="PROSITE" id="PS00362">
    <property type="entry name" value="RIBOSOMAL_S15"/>
    <property type="match status" value="1"/>
</dbReference>
<organism>
    <name type="scientific">Streptococcus mutans serotype c (strain ATCC 700610 / UA159)</name>
    <dbReference type="NCBI Taxonomy" id="210007"/>
    <lineage>
        <taxon>Bacteria</taxon>
        <taxon>Bacillati</taxon>
        <taxon>Bacillota</taxon>
        <taxon>Bacilli</taxon>
        <taxon>Lactobacillales</taxon>
        <taxon>Streptococcaceae</taxon>
        <taxon>Streptococcus</taxon>
    </lineage>
</organism>
<sequence length="89" mass="10533">MAISKEKKNEIIKQYARHDGDTGSVEVQVAVLTWEINHLNEHIKQHKKDHATYRGLMKKIGHRRNLLAYLRRTDVNRYRDLISSLGLRR</sequence>
<name>RS15_STRMU</name>
<evidence type="ECO:0000255" key="1">
    <source>
        <dbReference type="HAMAP-Rule" id="MF_01343"/>
    </source>
</evidence>
<evidence type="ECO:0000305" key="2"/>
<reference key="1">
    <citation type="journal article" date="2002" name="Proc. Natl. Acad. Sci. U.S.A.">
        <title>Genome sequence of Streptococcus mutans UA159, a cariogenic dental pathogen.</title>
        <authorList>
            <person name="Ajdic D.J."/>
            <person name="McShan W.M."/>
            <person name="McLaughlin R.E."/>
            <person name="Savic G."/>
            <person name="Chang J."/>
            <person name="Carson M.B."/>
            <person name="Primeaux C."/>
            <person name="Tian R."/>
            <person name="Kenton S."/>
            <person name="Jia H.G."/>
            <person name="Lin S.P."/>
            <person name="Qian Y."/>
            <person name="Li S."/>
            <person name="Zhu H."/>
            <person name="Najar F.Z."/>
            <person name="Lai H."/>
            <person name="White J."/>
            <person name="Roe B.A."/>
            <person name="Ferretti J.J."/>
        </authorList>
    </citation>
    <scope>NUCLEOTIDE SEQUENCE [LARGE SCALE GENOMIC DNA]</scope>
    <source>
        <strain>ATCC 700610 / UA159</strain>
    </source>
</reference>